<name>ACCA_BRASO</name>
<protein>
    <recommendedName>
        <fullName evidence="1">Acetyl-coenzyme A carboxylase carboxyl transferase subunit alpha</fullName>
        <shortName evidence="1">ACCase subunit alpha</shortName>
        <shortName evidence="1">Acetyl-CoA carboxylase carboxyltransferase subunit alpha</shortName>
        <ecNumber evidence="1">2.1.3.15</ecNumber>
    </recommendedName>
</protein>
<keyword id="KW-0067">ATP-binding</keyword>
<keyword id="KW-0963">Cytoplasm</keyword>
<keyword id="KW-0275">Fatty acid biosynthesis</keyword>
<keyword id="KW-0276">Fatty acid metabolism</keyword>
<keyword id="KW-0444">Lipid biosynthesis</keyword>
<keyword id="KW-0443">Lipid metabolism</keyword>
<keyword id="KW-0547">Nucleotide-binding</keyword>
<keyword id="KW-1185">Reference proteome</keyword>
<keyword id="KW-0808">Transferase</keyword>
<sequence length="320" mass="34433">MPDPMRSYLDFEKPVAELDSKVDELRAMAASGTDIGEEVSRIEEKAGQALADLYANLTPWQKTMVARHPQRPHFTDFVNALITEFTPLAGDRKFGEDAALLGGFGRFRGEPICVMGQEKGATTESRLKHNFGMARPEGYRKAVRLMEMAERFGLPVLSLVDSAGAYPGIGAEERGQAEAIARSTDACLALGVPNVAIITGEGMSGGAIALTTANKVLMLEHAIYSVISPEAASSILWRDGTKAQEAANSMKITAQDMLRFGVVDTILKEPVGGAHRDPAAMIAATGDAIAQAFDELKGLDAAAIRKQRRQKFIEIGRKLS</sequence>
<feature type="chain" id="PRO_1000062583" description="Acetyl-coenzyme A carboxylase carboxyl transferase subunit alpha">
    <location>
        <begin position="1"/>
        <end position="320"/>
    </location>
</feature>
<feature type="domain" description="CoA carboxyltransferase C-terminal" evidence="2">
    <location>
        <begin position="41"/>
        <end position="295"/>
    </location>
</feature>
<accession>A4YKW6</accession>
<comment type="function">
    <text evidence="1">Component of the acetyl coenzyme A carboxylase (ACC) complex. First, biotin carboxylase catalyzes the carboxylation of biotin on its carrier protein (BCCP) and then the CO(2) group is transferred by the carboxyltransferase to acetyl-CoA to form malonyl-CoA.</text>
</comment>
<comment type="catalytic activity">
    <reaction evidence="1">
        <text>N(6)-carboxybiotinyl-L-lysyl-[protein] + acetyl-CoA = N(6)-biotinyl-L-lysyl-[protein] + malonyl-CoA</text>
        <dbReference type="Rhea" id="RHEA:54728"/>
        <dbReference type="Rhea" id="RHEA-COMP:10505"/>
        <dbReference type="Rhea" id="RHEA-COMP:10506"/>
        <dbReference type="ChEBI" id="CHEBI:57288"/>
        <dbReference type="ChEBI" id="CHEBI:57384"/>
        <dbReference type="ChEBI" id="CHEBI:83144"/>
        <dbReference type="ChEBI" id="CHEBI:83145"/>
        <dbReference type="EC" id="2.1.3.15"/>
    </reaction>
</comment>
<comment type="pathway">
    <text evidence="1">Lipid metabolism; malonyl-CoA biosynthesis; malonyl-CoA from acetyl-CoA: step 1/1.</text>
</comment>
<comment type="subunit">
    <text evidence="1">Acetyl-CoA carboxylase is a heterohexamer composed of biotin carboxyl carrier protein (AccB), biotin carboxylase (AccC) and two subunits each of ACCase subunit alpha (AccA) and ACCase subunit beta (AccD).</text>
</comment>
<comment type="subcellular location">
    <subcellularLocation>
        <location evidence="1">Cytoplasm</location>
    </subcellularLocation>
</comment>
<comment type="similarity">
    <text evidence="1">Belongs to the AccA family.</text>
</comment>
<dbReference type="EC" id="2.1.3.15" evidence="1"/>
<dbReference type="EMBL" id="CU234118">
    <property type="protein sequence ID" value="CAL74542.1"/>
    <property type="molecule type" value="Genomic_DNA"/>
</dbReference>
<dbReference type="RefSeq" id="WP_011923809.1">
    <property type="nucleotide sequence ID" value="NC_009445.1"/>
</dbReference>
<dbReference type="SMR" id="A4YKW6"/>
<dbReference type="STRING" id="114615.BRADO0606"/>
<dbReference type="KEGG" id="bra:BRADO0606"/>
<dbReference type="eggNOG" id="COG0825">
    <property type="taxonomic scope" value="Bacteria"/>
</dbReference>
<dbReference type="HOGENOM" id="CLU_015486_0_2_5"/>
<dbReference type="OrthoDB" id="9808023at2"/>
<dbReference type="UniPathway" id="UPA00655">
    <property type="reaction ID" value="UER00711"/>
</dbReference>
<dbReference type="Proteomes" id="UP000001994">
    <property type="component" value="Chromosome"/>
</dbReference>
<dbReference type="GO" id="GO:0009317">
    <property type="term" value="C:acetyl-CoA carboxylase complex"/>
    <property type="evidence" value="ECO:0007669"/>
    <property type="project" value="InterPro"/>
</dbReference>
<dbReference type="GO" id="GO:0003989">
    <property type="term" value="F:acetyl-CoA carboxylase activity"/>
    <property type="evidence" value="ECO:0007669"/>
    <property type="project" value="InterPro"/>
</dbReference>
<dbReference type="GO" id="GO:0005524">
    <property type="term" value="F:ATP binding"/>
    <property type="evidence" value="ECO:0007669"/>
    <property type="project" value="UniProtKB-KW"/>
</dbReference>
<dbReference type="GO" id="GO:0016743">
    <property type="term" value="F:carboxyl- or carbamoyltransferase activity"/>
    <property type="evidence" value="ECO:0007669"/>
    <property type="project" value="UniProtKB-UniRule"/>
</dbReference>
<dbReference type="GO" id="GO:0006633">
    <property type="term" value="P:fatty acid biosynthetic process"/>
    <property type="evidence" value="ECO:0007669"/>
    <property type="project" value="UniProtKB-KW"/>
</dbReference>
<dbReference type="GO" id="GO:2001295">
    <property type="term" value="P:malonyl-CoA biosynthetic process"/>
    <property type="evidence" value="ECO:0007669"/>
    <property type="project" value="UniProtKB-UniRule"/>
</dbReference>
<dbReference type="Gene3D" id="3.90.226.10">
    <property type="entry name" value="2-enoyl-CoA Hydratase, Chain A, domain 1"/>
    <property type="match status" value="1"/>
</dbReference>
<dbReference type="HAMAP" id="MF_00823">
    <property type="entry name" value="AcetylCoA_CT_alpha"/>
    <property type="match status" value="1"/>
</dbReference>
<dbReference type="InterPro" id="IPR001095">
    <property type="entry name" value="Acetyl_CoA_COase_a_su"/>
</dbReference>
<dbReference type="InterPro" id="IPR029045">
    <property type="entry name" value="ClpP/crotonase-like_dom_sf"/>
</dbReference>
<dbReference type="InterPro" id="IPR011763">
    <property type="entry name" value="COA_CT_C"/>
</dbReference>
<dbReference type="NCBIfam" id="TIGR00513">
    <property type="entry name" value="accA"/>
    <property type="match status" value="1"/>
</dbReference>
<dbReference type="NCBIfam" id="NF041504">
    <property type="entry name" value="AccA_sub"/>
    <property type="match status" value="1"/>
</dbReference>
<dbReference type="NCBIfam" id="NF004344">
    <property type="entry name" value="PRK05724.1"/>
    <property type="match status" value="1"/>
</dbReference>
<dbReference type="PANTHER" id="PTHR42853">
    <property type="entry name" value="ACETYL-COENZYME A CARBOXYLASE CARBOXYL TRANSFERASE SUBUNIT ALPHA"/>
    <property type="match status" value="1"/>
</dbReference>
<dbReference type="PANTHER" id="PTHR42853:SF3">
    <property type="entry name" value="ACETYL-COENZYME A CARBOXYLASE CARBOXYL TRANSFERASE SUBUNIT ALPHA, CHLOROPLASTIC"/>
    <property type="match status" value="1"/>
</dbReference>
<dbReference type="Pfam" id="PF03255">
    <property type="entry name" value="ACCA"/>
    <property type="match status" value="1"/>
</dbReference>
<dbReference type="PRINTS" id="PR01069">
    <property type="entry name" value="ACCCTRFRASEA"/>
</dbReference>
<dbReference type="SUPFAM" id="SSF52096">
    <property type="entry name" value="ClpP/crotonase"/>
    <property type="match status" value="1"/>
</dbReference>
<dbReference type="PROSITE" id="PS50989">
    <property type="entry name" value="COA_CT_CTER"/>
    <property type="match status" value="1"/>
</dbReference>
<organism>
    <name type="scientific">Bradyrhizobium sp. (strain ORS 278)</name>
    <dbReference type="NCBI Taxonomy" id="114615"/>
    <lineage>
        <taxon>Bacteria</taxon>
        <taxon>Pseudomonadati</taxon>
        <taxon>Pseudomonadota</taxon>
        <taxon>Alphaproteobacteria</taxon>
        <taxon>Hyphomicrobiales</taxon>
        <taxon>Nitrobacteraceae</taxon>
        <taxon>Bradyrhizobium</taxon>
    </lineage>
</organism>
<gene>
    <name evidence="1" type="primary">accA</name>
    <name type="ordered locus">BRADO0606</name>
</gene>
<proteinExistence type="inferred from homology"/>
<evidence type="ECO:0000255" key="1">
    <source>
        <dbReference type="HAMAP-Rule" id="MF_00823"/>
    </source>
</evidence>
<evidence type="ECO:0000255" key="2">
    <source>
        <dbReference type="PROSITE-ProRule" id="PRU01137"/>
    </source>
</evidence>
<reference key="1">
    <citation type="journal article" date="2007" name="Science">
        <title>Legumes symbioses: absence of nod genes in photosynthetic bradyrhizobia.</title>
        <authorList>
            <person name="Giraud E."/>
            <person name="Moulin L."/>
            <person name="Vallenet D."/>
            <person name="Barbe V."/>
            <person name="Cytryn E."/>
            <person name="Avarre J.-C."/>
            <person name="Jaubert M."/>
            <person name="Simon D."/>
            <person name="Cartieaux F."/>
            <person name="Prin Y."/>
            <person name="Bena G."/>
            <person name="Hannibal L."/>
            <person name="Fardoux J."/>
            <person name="Kojadinovic M."/>
            <person name="Vuillet L."/>
            <person name="Lajus A."/>
            <person name="Cruveiller S."/>
            <person name="Rouy Z."/>
            <person name="Mangenot S."/>
            <person name="Segurens B."/>
            <person name="Dossat C."/>
            <person name="Franck W.L."/>
            <person name="Chang W.-S."/>
            <person name="Saunders E."/>
            <person name="Bruce D."/>
            <person name="Richardson P."/>
            <person name="Normand P."/>
            <person name="Dreyfus B."/>
            <person name="Pignol D."/>
            <person name="Stacey G."/>
            <person name="Emerich D."/>
            <person name="Vermeglio A."/>
            <person name="Medigue C."/>
            <person name="Sadowsky M."/>
        </authorList>
    </citation>
    <scope>NUCLEOTIDE SEQUENCE [LARGE SCALE GENOMIC DNA]</scope>
    <source>
        <strain>ORS 278</strain>
    </source>
</reference>